<feature type="chain" id="PRO_0000228050" description="Mitochondrial import inner membrane translocase subunit Tim10 B">
    <location>
        <begin position="1"/>
        <end position="102"/>
    </location>
</feature>
<feature type="short sequence motif" description="Twin CX3C motif">
    <location>
        <begin position="27"/>
        <end position="51"/>
    </location>
</feature>
<feature type="disulfide bond" evidence="1">
    <location>
        <begin position="27"/>
        <end position="51"/>
    </location>
</feature>
<feature type="disulfide bond" evidence="1">
    <location>
        <begin position="31"/>
        <end position="47"/>
    </location>
</feature>
<dbReference type="EMBL" id="CR857919">
    <property type="protein sequence ID" value="CAH90167.1"/>
    <property type="molecule type" value="mRNA"/>
</dbReference>
<dbReference type="RefSeq" id="NP_001125053.1">
    <property type="nucleotide sequence ID" value="NM_001131581.1"/>
</dbReference>
<dbReference type="SMR" id="Q5RDJ0"/>
<dbReference type="FunCoup" id="Q5RDJ0">
    <property type="interactions" value="633"/>
</dbReference>
<dbReference type="STRING" id="9601.ENSPPYP00000004060"/>
<dbReference type="Ensembl" id="ENSPPYT00000055128.1">
    <property type="protein sequence ID" value="ENSPPYP00000045083.1"/>
    <property type="gene ID" value="ENSPPYG00000003541.2"/>
</dbReference>
<dbReference type="GeneID" id="100171934"/>
<dbReference type="KEGG" id="pon:100171934"/>
<dbReference type="CTD" id="26515"/>
<dbReference type="eggNOG" id="KOG3479">
    <property type="taxonomic scope" value="Eukaryota"/>
</dbReference>
<dbReference type="GeneTree" id="ENSGT00450000040326"/>
<dbReference type="HOGENOM" id="CLU_141397_2_2_1"/>
<dbReference type="InParanoid" id="Q5RDJ0"/>
<dbReference type="OMA" id="FNRCVDN"/>
<dbReference type="OrthoDB" id="1551503at2759"/>
<dbReference type="TreeFam" id="TF106188"/>
<dbReference type="Proteomes" id="UP000001595">
    <property type="component" value="Chromosome 11"/>
</dbReference>
<dbReference type="GO" id="GO:0042719">
    <property type="term" value="C:mitochondrial intermembrane space protein transporter complex"/>
    <property type="evidence" value="ECO:0007669"/>
    <property type="project" value="Ensembl"/>
</dbReference>
<dbReference type="GO" id="GO:0042721">
    <property type="term" value="C:TIM22 mitochondrial import inner membrane insertion complex"/>
    <property type="evidence" value="ECO:0000250"/>
    <property type="project" value="UniProtKB"/>
</dbReference>
<dbReference type="GO" id="GO:0046872">
    <property type="term" value="F:metal ion binding"/>
    <property type="evidence" value="ECO:0007669"/>
    <property type="project" value="UniProtKB-KW"/>
</dbReference>
<dbReference type="GO" id="GO:0015031">
    <property type="term" value="P:protein transport"/>
    <property type="evidence" value="ECO:0007669"/>
    <property type="project" value="UniProtKB-KW"/>
</dbReference>
<dbReference type="FunFam" id="1.10.287.810:FF:000006">
    <property type="entry name" value="mitochondrial import inner membrane translocase subunit Tim10 B"/>
    <property type="match status" value="1"/>
</dbReference>
<dbReference type="Gene3D" id="1.10.287.810">
    <property type="entry name" value="Mitochondrial import inner membrane translocase subunit tim13 like domains"/>
    <property type="match status" value="1"/>
</dbReference>
<dbReference type="InterPro" id="IPR050673">
    <property type="entry name" value="Mito_inner_translocase_sub"/>
</dbReference>
<dbReference type="InterPro" id="IPR004217">
    <property type="entry name" value="Tim10-like"/>
</dbReference>
<dbReference type="InterPro" id="IPR035427">
    <property type="entry name" value="Tim10-like_dom_sf"/>
</dbReference>
<dbReference type="PANTHER" id="PTHR13172">
    <property type="entry name" value="MITOCHONDRIAL IMPORT INNER MEMBRANE TRANSLOCASE SUBUNIT TIM9B"/>
    <property type="match status" value="1"/>
</dbReference>
<dbReference type="Pfam" id="PF02953">
    <property type="entry name" value="zf-Tim10_DDP"/>
    <property type="match status" value="1"/>
</dbReference>
<dbReference type="SUPFAM" id="SSF144122">
    <property type="entry name" value="Tim10-like"/>
    <property type="match status" value="1"/>
</dbReference>
<evidence type="ECO:0000250" key="1">
    <source>
        <dbReference type="UniProtKB" id="P87108"/>
    </source>
</evidence>
<evidence type="ECO:0000250" key="2">
    <source>
        <dbReference type="UniProtKB" id="Q9Y5J6"/>
    </source>
</evidence>
<proteinExistence type="inferred from homology"/>
<sequence length="102" mass="11430">MEQQQQQQQLRNLRDFLLVYNRMTELCFQRCVPSLHHRALDAEEEACLHSCAGKLIHSNHRLMAAYVQLMPALVQRRIADYEAASAVPGVAAEQPGVSPSGS</sequence>
<name>T10B_PONAB</name>
<comment type="function">
    <text evidence="2">Component of the TIM22 complex, a complex that mediates the import and insertion of multi-pass transmembrane proteins into the mitochondrial inner membrane. The TIM22 complex forms a twin-pore translocase that uses the membrane potential as the external driving force. In the TIM22 complex, it may act as a docking point for the soluble 70 kDa complex that guides the target proteins in transit through the aqueous mitochondrial intermembrane space.</text>
</comment>
<comment type="subunit">
    <text evidence="2">Component of the TIM22 complex, which core is composed of TIMM22, associated with TIMM10 (TIMM10A and/or TIMM10B), TIMM9, AGK and TIMM29.</text>
</comment>
<comment type="subcellular location">
    <subcellularLocation>
        <location evidence="2">Mitochondrion inner membrane</location>
        <topology evidence="2">Peripheral membrane protein</topology>
    </subcellularLocation>
</comment>
<comment type="domain">
    <text evidence="1">The twin CX3C motif contains 4 conserved Cys residues that form 2 disulfide bonds in the mitochondrial intermembrane space. However, during the transit of TIMM10B from cytoplasm into mitochondrion, the Cys residues probably coordinate zinc, thereby preventing folding and allowing its transfer across mitochondrial outer membrane.</text>
</comment>
<gene>
    <name type="primary">TIMM10B</name>
    <name type="synonym">FXC1</name>
    <name type="synonym">TIM9B</name>
    <name type="synonym">TIMM9B</name>
</gene>
<organism>
    <name type="scientific">Pongo abelii</name>
    <name type="common">Sumatran orangutan</name>
    <name type="synonym">Pongo pygmaeus abelii</name>
    <dbReference type="NCBI Taxonomy" id="9601"/>
    <lineage>
        <taxon>Eukaryota</taxon>
        <taxon>Metazoa</taxon>
        <taxon>Chordata</taxon>
        <taxon>Craniata</taxon>
        <taxon>Vertebrata</taxon>
        <taxon>Euteleostomi</taxon>
        <taxon>Mammalia</taxon>
        <taxon>Eutheria</taxon>
        <taxon>Euarchontoglires</taxon>
        <taxon>Primates</taxon>
        <taxon>Haplorrhini</taxon>
        <taxon>Catarrhini</taxon>
        <taxon>Hominidae</taxon>
        <taxon>Pongo</taxon>
    </lineage>
</organism>
<reference key="1">
    <citation type="submission" date="2004-11" db="EMBL/GenBank/DDBJ databases">
        <authorList>
            <consortium name="The German cDNA consortium"/>
        </authorList>
    </citation>
    <scope>NUCLEOTIDE SEQUENCE [LARGE SCALE MRNA]</scope>
    <source>
        <tissue>Kidney</tissue>
    </source>
</reference>
<protein>
    <recommendedName>
        <fullName>Mitochondrial import inner membrane translocase subunit Tim10 B</fullName>
    </recommendedName>
    <alternativeName>
        <fullName>Mitochondrial import inner membrane translocase subunit Tim9 B</fullName>
    </alternativeName>
    <alternativeName>
        <fullName>TIMM10B</fullName>
        <shortName>Tim10b</shortName>
    </alternativeName>
</protein>
<keyword id="KW-1015">Disulfide bond</keyword>
<keyword id="KW-0472">Membrane</keyword>
<keyword id="KW-0479">Metal-binding</keyword>
<keyword id="KW-0496">Mitochondrion</keyword>
<keyword id="KW-0999">Mitochondrion inner membrane</keyword>
<keyword id="KW-0653">Protein transport</keyword>
<keyword id="KW-1185">Reference proteome</keyword>
<keyword id="KW-0811">Translocation</keyword>
<keyword id="KW-0813">Transport</keyword>
<keyword id="KW-0862">Zinc</keyword>
<accession>Q5RDJ0</accession>